<organism>
    <name type="scientific">Influenza A virus (strain A/Udorn/307/1972 H3N2)</name>
    <dbReference type="NCBI Taxonomy" id="381517"/>
    <lineage>
        <taxon>Viruses</taxon>
        <taxon>Riboviria</taxon>
        <taxon>Orthornavirae</taxon>
        <taxon>Negarnaviricota</taxon>
        <taxon>Polyploviricotina</taxon>
        <taxon>Insthoviricetes</taxon>
        <taxon>Articulavirales</taxon>
        <taxon>Orthomyxoviridae</taxon>
        <taxon>Alphainfluenzavirus</taxon>
        <taxon>Alphainfluenzavirus influenzae</taxon>
        <taxon>Influenza A virus</taxon>
    </lineage>
</organism>
<sequence>MKTIIALSYIFCLVLGQDFPGNDNSTATLCLGHHAVPNGTLVKTITNDQIEVTNATELVQSSSTGKICNNPHRILDGIDCTLIDALLGDPHCDGFQNETWDLFVERSKAFSNCYPYDVPDYASLRSLVASSGTLEFISEGFTWTGVTQNGGSNACKRGPDSGFFSRLNWLYKSGSTYPVLNVTMPNNDNFDKLYIWGVHHPSTDQEQTSLYVQASGRVTVSTKRSQQTIIPNIGSRPWVRGLSSRISIYWTIVKPGDILVINSNGNLIAPRGYFKMRTGKSSIMRSDAPIGTCISECITPNGSIPNDKPFQNVNKITYGACPKYVKQNTLKLATGMRNVPEKQTRGLFGAIAGFIENGWEGMIDGWYGFRHQNSEGTGQAADLKSTQAAIDQINGKLNRVIEKTNEKFHQIEKEFSEVEGRIQDLEKYVEDTKIDLWSYNAELLVALENQHTIDLTDSEMNKLFEKTRRQLRENAEDMGNGCFKIYHKCDNACIGSIRNGTYDHDVYRDEALNNRFQIKGVELKSGYKDWILWISFAISCFLLCVVLLGFIMWACQKGNIRCNICI</sequence>
<name>HEMA_I72A2</name>
<proteinExistence type="inferred from homology"/>
<accession>P19106</accession>
<accession>Q1K9E1</accession>
<accession>Q67022</accession>
<accession>Q67023</accession>
<evidence type="ECO:0000255" key="1">
    <source>
        <dbReference type="HAMAP-Rule" id="MF_04072"/>
    </source>
</evidence>
<evidence type="ECO:0000305" key="2"/>
<gene>
    <name evidence="1" type="primary">HA</name>
</gene>
<reference key="1">
    <citation type="journal article" date="1984" name="Dokl. Akad. Nauk SSSR">
        <title>Nucleotide sequence of the hemagglutinin gene of the influenza virus A/Udorn/307/72 (H3N2).</title>
        <authorList>
            <person name="Yuferov V."/>
            <person name="Karginov V."/>
            <person name="Samokhvalov E."/>
            <person name="Chizhikov V."/>
            <person name="Vasilonko S."/>
            <person name="Uryvaev L."/>
            <person name="Zhdanov V.M."/>
        </authorList>
    </citation>
    <scope>NUCLEOTIDE SEQUENCE [GENOMIC RNA]</scope>
</reference>
<reference key="2">
    <citation type="submission" date="2006-04" db="EMBL/GenBank/DDBJ databases">
        <title>Complete genome sequencing and analysis of selected influenza virus vaccine strains spanning six decades (1933-1999).</title>
        <authorList>
            <person name="Mbawuike I.N."/>
            <person name="Zhang Y."/>
            <person name="Yamada R.E."/>
            <person name="Nino D."/>
            <person name="Bui H.-H."/>
            <person name="Sette A."/>
            <person name="Couch R.B."/>
        </authorList>
    </citation>
    <scope>NUCLEOTIDE SEQUENCE [GENOMIC RNA]</scope>
</reference>
<dbReference type="EMBL" id="M54895">
    <property type="protein sequence ID" value="AAA43099.1"/>
    <property type="molecule type" value="Genomic_RNA"/>
</dbReference>
<dbReference type="EMBL" id="DQ508929">
    <property type="protein sequence ID" value="ABF21281.1"/>
    <property type="molecule type" value="Genomic_RNA"/>
</dbReference>
<dbReference type="SMR" id="P19106"/>
<dbReference type="GlyCosmos" id="P19106">
    <property type="glycosylation" value="7 sites, No reported glycans"/>
</dbReference>
<dbReference type="Proteomes" id="UP000153055">
    <property type="component" value="Genome"/>
</dbReference>
<dbReference type="GO" id="GO:0020002">
    <property type="term" value="C:host cell plasma membrane"/>
    <property type="evidence" value="ECO:0007669"/>
    <property type="project" value="UniProtKB-SubCell"/>
</dbReference>
<dbReference type="GO" id="GO:0016020">
    <property type="term" value="C:membrane"/>
    <property type="evidence" value="ECO:0007669"/>
    <property type="project" value="UniProtKB-UniRule"/>
</dbReference>
<dbReference type="GO" id="GO:0019031">
    <property type="term" value="C:viral envelope"/>
    <property type="evidence" value="ECO:0007669"/>
    <property type="project" value="UniProtKB-UniRule"/>
</dbReference>
<dbReference type="GO" id="GO:0055036">
    <property type="term" value="C:virion membrane"/>
    <property type="evidence" value="ECO:0007669"/>
    <property type="project" value="UniProtKB-SubCell"/>
</dbReference>
<dbReference type="GO" id="GO:0046789">
    <property type="term" value="F:host cell surface receptor binding"/>
    <property type="evidence" value="ECO:0007669"/>
    <property type="project" value="UniProtKB-UniRule"/>
</dbReference>
<dbReference type="GO" id="GO:0075512">
    <property type="term" value="P:clathrin-dependent endocytosis of virus by host cell"/>
    <property type="evidence" value="ECO:0007669"/>
    <property type="project" value="UniProtKB-UniRule"/>
</dbReference>
<dbReference type="GO" id="GO:0039654">
    <property type="term" value="P:fusion of virus membrane with host endosome membrane"/>
    <property type="evidence" value="ECO:0007669"/>
    <property type="project" value="UniProtKB-UniRule"/>
</dbReference>
<dbReference type="GO" id="GO:0019064">
    <property type="term" value="P:fusion of virus membrane with host plasma membrane"/>
    <property type="evidence" value="ECO:0007669"/>
    <property type="project" value="InterPro"/>
</dbReference>
<dbReference type="GO" id="GO:0046761">
    <property type="term" value="P:viral budding from plasma membrane"/>
    <property type="evidence" value="ECO:0007669"/>
    <property type="project" value="UniProtKB-UniRule"/>
</dbReference>
<dbReference type="GO" id="GO:0019062">
    <property type="term" value="P:virion attachment to host cell"/>
    <property type="evidence" value="ECO:0007669"/>
    <property type="project" value="UniProtKB-KW"/>
</dbReference>
<dbReference type="FunFam" id="3.90.20.10:FF:000001">
    <property type="entry name" value="Hemagglutinin"/>
    <property type="match status" value="1"/>
</dbReference>
<dbReference type="FunFam" id="3.90.209.20:FF:000001">
    <property type="entry name" value="Hemagglutinin"/>
    <property type="match status" value="1"/>
</dbReference>
<dbReference type="Gene3D" id="3.90.20.10">
    <property type="match status" value="1"/>
</dbReference>
<dbReference type="Gene3D" id="3.90.209.20">
    <property type="match status" value="1"/>
</dbReference>
<dbReference type="HAMAP" id="MF_04072">
    <property type="entry name" value="INFV_HEMA"/>
    <property type="match status" value="1"/>
</dbReference>
<dbReference type="InterPro" id="IPR008980">
    <property type="entry name" value="Capsid_hemagglutn"/>
</dbReference>
<dbReference type="InterPro" id="IPR013828">
    <property type="entry name" value="Hemagglutn_HA1_a/b_dom_sf"/>
</dbReference>
<dbReference type="InterPro" id="IPR000149">
    <property type="entry name" value="Hemagglutn_influenz_A"/>
</dbReference>
<dbReference type="InterPro" id="IPR001364">
    <property type="entry name" value="Hemagglutn_influenz_A/B"/>
</dbReference>
<dbReference type="Pfam" id="PF00509">
    <property type="entry name" value="Hemagglutinin"/>
    <property type="match status" value="1"/>
</dbReference>
<dbReference type="PRINTS" id="PR00330">
    <property type="entry name" value="HEMAGGLUTN1"/>
</dbReference>
<dbReference type="PRINTS" id="PR00329">
    <property type="entry name" value="HEMAGGLUTN12"/>
</dbReference>
<dbReference type="SUPFAM" id="SSF58064">
    <property type="entry name" value="Influenza hemagglutinin (stalk)"/>
    <property type="match status" value="1"/>
</dbReference>
<dbReference type="SUPFAM" id="SSF49818">
    <property type="entry name" value="Viral protein domain"/>
    <property type="match status" value="1"/>
</dbReference>
<organismHost>
    <name type="scientific">Aves</name>
    <dbReference type="NCBI Taxonomy" id="8782"/>
</organismHost>
<organismHost>
    <name type="scientific">Cetacea</name>
    <name type="common">whales</name>
    <dbReference type="NCBI Taxonomy" id="9721"/>
</organismHost>
<organismHost>
    <name type="scientific">Homo sapiens</name>
    <name type="common">Human</name>
    <dbReference type="NCBI Taxonomy" id="9606"/>
</organismHost>
<organismHost>
    <name type="scientific">Phocidae</name>
    <name type="common">true seals</name>
    <dbReference type="NCBI Taxonomy" id="9709"/>
</organismHost>
<organismHost>
    <name type="scientific">Sus scrofa</name>
    <name type="common">Pig</name>
    <dbReference type="NCBI Taxonomy" id="9823"/>
</organismHost>
<comment type="function">
    <text>Binds to sialic acid-containing receptors on the cell surface, bringing about the attachment of the virus particle to the cell. This attachment induces virion internalization of about two third of the virus particles through clathrin-dependent endocytosis and about one third through a clathrin- and caveolin-independent pathway. Plays a major role in the determination of host range restriction and virulence. Class I viral fusion protein. Responsible for penetration of the virus into the cell cytoplasm by mediating the fusion of the membrane of the endocytosed virus particle with the endosomal membrane. Low pH in endosomes induces an irreversible conformational change in HA2, releasing the fusion hydrophobic peptide. Several trimers are required to form a competent fusion pore.</text>
</comment>
<comment type="function">
    <text evidence="1">Binds to sialic acid-containing receptors on the cell surface, bringing about the attachment of the virus particle to the cell. This attachment induces virion internalization either through clathrin-dependent endocytosis or through clathrin- and caveolin-independent pathway. Plays a major role in the determination of host range restriction and virulence. Class I viral fusion protein. Responsible for penetration of the virus into the cell cytoplasm by mediating the fusion of the membrane of the endocytosed virus particle with the endosomal membrane. Low pH in endosomes induces an irreversible conformational change in HA2, releasing the fusion hydrophobic peptide. Several trimers are required to form a competent fusion pore.</text>
</comment>
<comment type="subunit">
    <text evidence="1">Homotrimer of disulfide-linked HA1-HA2.</text>
</comment>
<comment type="subcellular location">
    <subcellularLocation>
        <location evidence="1">Virion membrane</location>
        <topology evidence="1">Single-pass type I membrane protein</topology>
    </subcellularLocation>
    <subcellularLocation>
        <location evidence="1">Host apical cell membrane</location>
        <topology evidence="1">Single-pass type I membrane protein</topology>
    </subcellularLocation>
    <text evidence="1">Targeted to the apical plasma membrane in epithelial polarized cells through a signal present in the transmembrane domain. Associated with glycosphingolipid- and cholesterol-enriched detergent-resistant lipid rafts.</text>
</comment>
<comment type="PTM">
    <text evidence="1">Palmitoylated.</text>
</comment>
<comment type="PTM">
    <text evidence="1">In natural infection, inactive HA is matured into HA1 and HA2 outside the cell by one or more trypsin-like, arginine-specific endoprotease secreted by the bronchial epithelial cells. One identified protease that may be involved in this process is secreted in lungs by club cells.</text>
</comment>
<comment type="miscellaneous">
    <text>Major glycoprotein, comprises over 80% of the envelope proteins present in virus particle.</text>
</comment>
<comment type="miscellaneous">
    <text>The extent of infection into host organism is determined by HA. Influenza viruses bud from the apical surface of polarized epithelial cells (e.g. bronchial epithelial cells) into lumen of lungs and are therefore usually pneumotropic. The reason is that HA is cleaved by tryptase clara which is restricted to lungs. However, HAs of H5 and H7 pantropic avian viruses subtypes can be cleaved by furin and subtilisin-type enzymes, allowing the virus to grow in other organs than lungs.</text>
</comment>
<comment type="miscellaneous">
    <text evidence="2">The influenza A genome consist of 8 RNA segments. Genetic variation of hemagglutinin and/or neuraminidase genes results in the emergence of new influenza strains. The mechanism of variation can be the result of point mutations or the result of genetic reassortment between segments of two different strains.</text>
</comment>
<comment type="similarity">
    <text evidence="1">Belongs to the influenza viruses hemagglutinin family.</text>
</comment>
<keyword id="KW-1167">Clathrin- and caveolin-independent endocytosis of virus by host</keyword>
<keyword id="KW-1165">Clathrin-mediated endocytosis of virus by host</keyword>
<keyword id="KW-1015">Disulfide bond</keyword>
<keyword id="KW-1170">Fusion of virus membrane with host endosomal membrane</keyword>
<keyword id="KW-1168">Fusion of virus membrane with host membrane</keyword>
<keyword id="KW-0325">Glycoprotein</keyword>
<keyword id="KW-0348">Hemagglutinin</keyword>
<keyword id="KW-1032">Host cell membrane</keyword>
<keyword id="KW-1043">Host membrane</keyword>
<keyword id="KW-0945">Host-virus interaction</keyword>
<keyword id="KW-0449">Lipoprotein</keyword>
<keyword id="KW-0472">Membrane</keyword>
<keyword id="KW-0564">Palmitate</keyword>
<keyword id="KW-0732">Signal</keyword>
<keyword id="KW-0812">Transmembrane</keyword>
<keyword id="KW-1133">Transmembrane helix</keyword>
<keyword id="KW-1161">Viral attachment to host cell</keyword>
<keyword id="KW-0261">Viral envelope protein</keyword>
<keyword id="KW-1162">Viral penetration into host cytoplasm</keyword>
<keyword id="KW-0946">Virion</keyword>
<keyword id="KW-1164">Virus endocytosis by host</keyword>
<keyword id="KW-1160">Virus entry into host cell</keyword>
<protein>
    <recommendedName>
        <fullName evidence="1">Hemagglutinin</fullName>
    </recommendedName>
    <component>
        <recommendedName>
            <fullName evidence="1">Hemagglutinin HA1 chain</fullName>
        </recommendedName>
    </component>
    <component>
        <recommendedName>
            <fullName evidence="1">Hemagglutinin HA2 chain</fullName>
        </recommendedName>
    </component>
</protein>
<feature type="signal peptide" evidence="1">
    <location>
        <begin position="1"/>
        <end position="16"/>
    </location>
</feature>
<feature type="chain" id="PRO_0000440426" description="Hemagglutinin" evidence="1">
    <location>
        <begin position="17"/>
        <end position="566"/>
    </location>
</feature>
<feature type="chain" id="PRO_0000039061" description="Hemagglutinin HA1 chain">
    <location>
        <begin position="17"/>
        <end position="344"/>
    </location>
</feature>
<feature type="chain" id="PRO_0000039062" description="Hemagglutinin HA2 chain" evidence="1">
    <location>
        <begin position="346"/>
        <end position="566"/>
    </location>
</feature>
<feature type="topological domain" description="Extracellular" evidence="1">
    <location>
        <begin position="17"/>
        <end position="530"/>
    </location>
</feature>
<feature type="transmembrane region" description="Helical" evidence="1">
    <location>
        <begin position="531"/>
        <end position="551"/>
    </location>
</feature>
<feature type="topological domain" description="Cytoplasmic" evidence="1">
    <location>
        <begin position="552"/>
        <end position="566"/>
    </location>
</feature>
<feature type="site" description="Cleavage; by host" evidence="1">
    <location>
        <begin position="345"/>
        <end position="346"/>
    </location>
</feature>
<feature type="lipid moiety-binding region" description="S-palmitoyl cysteine; by host" evidence="1">
    <location>
        <position position="555"/>
    </location>
</feature>
<feature type="lipid moiety-binding region" description="S-palmitoyl cysteine; by host" evidence="1">
    <location>
        <position position="562"/>
    </location>
</feature>
<feature type="lipid moiety-binding region" description="S-palmitoyl cysteine; by host" evidence="1">
    <location>
        <position position="565"/>
    </location>
</feature>
<feature type="glycosylation site" description="N-linked (GlcNAc...) asparagine; by host" evidence="1">
    <location>
        <position position="24"/>
    </location>
</feature>
<feature type="glycosylation site" description="N-linked (GlcNAc...) asparagine; by host" evidence="1">
    <location>
        <position position="38"/>
    </location>
</feature>
<feature type="glycosylation site" description="N-linked (GlcNAc...) asparagine; by host" evidence="1">
    <location>
        <position position="54"/>
    </location>
</feature>
<feature type="glycosylation site" description="N-linked (GlcNAc...) asparagine; by host" evidence="1">
    <location>
        <position position="97"/>
    </location>
</feature>
<feature type="glycosylation site" description="N-linked (GlcNAc...) asparagine; by host" evidence="1">
    <location>
        <position position="181"/>
    </location>
</feature>
<feature type="glycosylation site" description="N-linked (GlcNAc...) asparagine; by host" evidence="1">
    <location>
        <position position="301"/>
    </location>
</feature>
<feature type="glycosylation site" description="N-linked (GlcNAc...) asparagine; by host" evidence="1">
    <location>
        <position position="499"/>
    </location>
</feature>
<feature type="disulfide bond" description="Interchain (between HA1 and HA2 chains)" evidence="1">
    <location>
        <begin position="30"/>
        <end position="482"/>
    </location>
</feature>
<feature type="disulfide bond" evidence="1">
    <location>
        <begin position="68"/>
        <end position="293"/>
    </location>
</feature>
<feature type="disulfide bond" evidence="1">
    <location>
        <begin position="80"/>
        <end position="92"/>
    </location>
</feature>
<feature type="disulfide bond" evidence="1">
    <location>
        <begin position="113"/>
        <end position="155"/>
    </location>
</feature>
<feature type="disulfide bond" evidence="1">
    <location>
        <begin position="297"/>
        <end position="321"/>
    </location>
</feature>
<feature type="disulfide bond" evidence="1">
    <location>
        <begin position="489"/>
        <end position="493"/>
    </location>
</feature>
<feature type="sequence conflict" description="In Ref. 1; AAA43099." evidence="2" ref="1">
    <original>G</original>
    <variation>S</variation>
    <location>
        <position position="349"/>
    </location>
</feature>
<feature type="sequence conflict" description="In Ref. 1; AAA43099." evidence="2" ref="1">
    <original>A</original>
    <variation>P</variation>
    <location>
        <position position="380"/>
    </location>
</feature>
<feature type="sequence conflict" description="In Ref. 1; AAA43099." evidence="2" ref="1">
    <original>R</original>
    <variation>S</variation>
    <location>
        <position position="468"/>
    </location>
</feature>
<feature type="sequence conflict" description="In Ref. 1; AAA43099." evidence="2" ref="1">
    <original>W</original>
    <variation>T</variation>
    <location>
        <position position="553"/>
    </location>
</feature>